<comment type="function">
    <text evidence="4 5 6">Calcium-binding protein. Binds one calcium ion per monomer (PubMed:17030513). Can promote differentiation of adipocytes (in vitro). Overexpression in 3T3-L1 preadipocytes increases their proliferation, enhances adipogenesis and reduces insulin-stimulated glucose uptake (PubMed:21266506, PubMed:23526364).</text>
</comment>
<comment type="subunit">
    <text evidence="4 5">Homodimer (PubMed:17030513). Interacts with TP53 (PubMed:21266506).</text>
</comment>
<comment type="subcellular location">
    <subcellularLocation>
        <location evidence="4 5">Nucleus</location>
        <location evidence="4 5">Nucleolus</location>
    </subcellularLocation>
    <subcellularLocation>
        <location evidence="4 5">Cytoplasm</location>
    </subcellularLocation>
    <text>Primarily nucleolar. A high intracellular calcium level induces nucleolar exit and nucleocytoplasmic transport, whereas a low intracellular calcium level leads to nuclear translocation and accumulation within specific region of nucleoli (PubMed:17030513).</text>
</comment>
<comment type="tissue specificity">
    <text evidence="4 5">Ubiquitous (PubMed:17030513). Widely distributed throughout the adult brain and predominantly expressed within specific astrocyte populations (PubMed:17030513). Expressed at high level in adipose tissues of obese animals (PubMed:21266506).</text>
</comment>
<comment type="domain">
    <text evidence="4 7">S100A16 proteins, but not other S100 proteins, have only one functional Ca(2+) binding site per monomer (PubMed:14684152, PubMed:17030513). Upon Ca(2+) binding, undergoes conformational changes leading to the exposure of hydrophobic patches which could be implicated in the Ca(2+)-dependent nuclear export. Binds Zn(2+) (PubMed:17030513). Ca(2+) and Zn(2+) do not bind to the same site (PubMed:17030513). Does not bind Cu(2+) (PubMed:17030513).</text>
</comment>
<comment type="similarity">
    <text evidence="1">Belongs to the S-100 family.</text>
</comment>
<accession>Q9D708</accession>
<accession>Q3TVE3</accession>
<name>S10AG_MOUSE</name>
<reference key="1">
    <citation type="journal article" date="2005" name="Science">
        <title>The transcriptional landscape of the mammalian genome.</title>
        <authorList>
            <person name="Carninci P."/>
            <person name="Kasukawa T."/>
            <person name="Katayama S."/>
            <person name="Gough J."/>
            <person name="Frith M.C."/>
            <person name="Maeda N."/>
            <person name="Oyama R."/>
            <person name="Ravasi T."/>
            <person name="Lenhard B."/>
            <person name="Wells C."/>
            <person name="Kodzius R."/>
            <person name="Shimokawa K."/>
            <person name="Bajic V.B."/>
            <person name="Brenner S.E."/>
            <person name="Batalov S."/>
            <person name="Forrest A.R."/>
            <person name="Zavolan M."/>
            <person name="Davis M.J."/>
            <person name="Wilming L.G."/>
            <person name="Aidinis V."/>
            <person name="Allen J.E."/>
            <person name="Ambesi-Impiombato A."/>
            <person name="Apweiler R."/>
            <person name="Aturaliya R.N."/>
            <person name="Bailey T.L."/>
            <person name="Bansal M."/>
            <person name="Baxter L."/>
            <person name="Beisel K.W."/>
            <person name="Bersano T."/>
            <person name="Bono H."/>
            <person name="Chalk A.M."/>
            <person name="Chiu K.P."/>
            <person name="Choudhary V."/>
            <person name="Christoffels A."/>
            <person name="Clutterbuck D.R."/>
            <person name="Crowe M.L."/>
            <person name="Dalla E."/>
            <person name="Dalrymple B.P."/>
            <person name="de Bono B."/>
            <person name="Della Gatta G."/>
            <person name="di Bernardo D."/>
            <person name="Down T."/>
            <person name="Engstrom P."/>
            <person name="Fagiolini M."/>
            <person name="Faulkner G."/>
            <person name="Fletcher C.F."/>
            <person name="Fukushima T."/>
            <person name="Furuno M."/>
            <person name="Futaki S."/>
            <person name="Gariboldi M."/>
            <person name="Georgii-Hemming P."/>
            <person name="Gingeras T.R."/>
            <person name="Gojobori T."/>
            <person name="Green R.E."/>
            <person name="Gustincich S."/>
            <person name="Harbers M."/>
            <person name="Hayashi Y."/>
            <person name="Hensch T.K."/>
            <person name="Hirokawa N."/>
            <person name="Hill D."/>
            <person name="Huminiecki L."/>
            <person name="Iacono M."/>
            <person name="Ikeo K."/>
            <person name="Iwama A."/>
            <person name="Ishikawa T."/>
            <person name="Jakt M."/>
            <person name="Kanapin A."/>
            <person name="Katoh M."/>
            <person name="Kawasawa Y."/>
            <person name="Kelso J."/>
            <person name="Kitamura H."/>
            <person name="Kitano H."/>
            <person name="Kollias G."/>
            <person name="Krishnan S.P."/>
            <person name="Kruger A."/>
            <person name="Kummerfeld S.K."/>
            <person name="Kurochkin I.V."/>
            <person name="Lareau L.F."/>
            <person name="Lazarevic D."/>
            <person name="Lipovich L."/>
            <person name="Liu J."/>
            <person name="Liuni S."/>
            <person name="McWilliam S."/>
            <person name="Madan Babu M."/>
            <person name="Madera M."/>
            <person name="Marchionni L."/>
            <person name="Matsuda H."/>
            <person name="Matsuzawa S."/>
            <person name="Miki H."/>
            <person name="Mignone F."/>
            <person name="Miyake S."/>
            <person name="Morris K."/>
            <person name="Mottagui-Tabar S."/>
            <person name="Mulder N."/>
            <person name="Nakano N."/>
            <person name="Nakauchi H."/>
            <person name="Ng P."/>
            <person name="Nilsson R."/>
            <person name="Nishiguchi S."/>
            <person name="Nishikawa S."/>
            <person name="Nori F."/>
            <person name="Ohara O."/>
            <person name="Okazaki Y."/>
            <person name="Orlando V."/>
            <person name="Pang K.C."/>
            <person name="Pavan W.J."/>
            <person name="Pavesi G."/>
            <person name="Pesole G."/>
            <person name="Petrovsky N."/>
            <person name="Piazza S."/>
            <person name="Reed J."/>
            <person name="Reid J.F."/>
            <person name="Ring B.Z."/>
            <person name="Ringwald M."/>
            <person name="Rost B."/>
            <person name="Ruan Y."/>
            <person name="Salzberg S.L."/>
            <person name="Sandelin A."/>
            <person name="Schneider C."/>
            <person name="Schoenbach C."/>
            <person name="Sekiguchi K."/>
            <person name="Semple C.A."/>
            <person name="Seno S."/>
            <person name="Sessa L."/>
            <person name="Sheng Y."/>
            <person name="Shibata Y."/>
            <person name="Shimada H."/>
            <person name="Shimada K."/>
            <person name="Silva D."/>
            <person name="Sinclair B."/>
            <person name="Sperling S."/>
            <person name="Stupka E."/>
            <person name="Sugiura K."/>
            <person name="Sultana R."/>
            <person name="Takenaka Y."/>
            <person name="Taki K."/>
            <person name="Tammoja K."/>
            <person name="Tan S.L."/>
            <person name="Tang S."/>
            <person name="Taylor M.S."/>
            <person name="Tegner J."/>
            <person name="Teichmann S.A."/>
            <person name="Ueda H.R."/>
            <person name="van Nimwegen E."/>
            <person name="Verardo R."/>
            <person name="Wei C.L."/>
            <person name="Yagi K."/>
            <person name="Yamanishi H."/>
            <person name="Zabarovsky E."/>
            <person name="Zhu S."/>
            <person name="Zimmer A."/>
            <person name="Hide W."/>
            <person name="Bult C."/>
            <person name="Grimmond S.M."/>
            <person name="Teasdale R.D."/>
            <person name="Liu E.T."/>
            <person name="Brusic V."/>
            <person name="Quackenbush J."/>
            <person name="Wahlestedt C."/>
            <person name="Mattick J.S."/>
            <person name="Hume D.A."/>
            <person name="Kai C."/>
            <person name="Sasaki D."/>
            <person name="Tomaru Y."/>
            <person name="Fukuda S."/>
            <person name="Kanamori-Katayama M."/>
            <person name="Suzuki M."/>
            <person name="Aoki J."/>
            <person name="Arakawa T."/>
            <person name="Iida J."/>
            <person name="Imamura K."/>
            <person name="Itoh M."/>
            <person name="Kato T."/>
            <person name="Kawaji H."/>
            <person name="Kawagashira N."/>
            <person name="Kawashima T."/>
            <person name="Kojima M."/>
            <person name="Kondo S."/>
            <person name="Konno H."/>
            <person name="Nakano K."/>
            <person name="Ninomiya N."/>
            <person name="Nishio T."/>
            <person name="Okada M."/>
            <person name="Plessy C."/>
            <person name="Shibata K."/>
            <person name="Shiraki T."/>
            <person name="Suzuki S."/>
            <person name="Tagami M."/>
            <person name="Waki K."/>
            <person name="Watahiki A."/>
            <person name="Okamura-Oho Y."/>
            <person name="Suzuki H."/>
            <person name="Kawai J."/>
            <person name="Hayashizaki Y."/>
        </authorList>
    </citation>
    <scope>NUCLEOTIDE SEQUENCE [LARGE SCALE MRNA]</scope>
    <source>
        <strain evidence="13">C57BL/6J</strain>
        <tissue evidence="13">Tongue</tissue>
    </source>
</reference>
<reference key="2">
    <citation type="journal article" date="2009" name="PLoS Biol.">
        <title>Lineage-specific biology revealed by a finished genome assembly of the mouse.</title>
        <authorList>
            <person name="Church D.M."/>
            <person name="Goodstadt L."/>
            <person name="Hillier L.W."/>
            <person name="Zody M.C."/>
            <person name="Goldstein S."/>
            <person name="She X."/>
            <person name="Bult C.J."/>
            <person name="Agarwala R."/>
            <person name="Cherry J.L."/>
            <person name="DiCuccio M."/>
            <person name="Hlavina W."/>
            <person name="Kapustin Y."/>
            <person name="Meric P."/>
            <person name="Maglott D."/>
            <person name="Birtle Z."/>
            <person name="Marques A.C."/>
            <person name="Graves T."/>
            <person name="Zhou S."/>
            <person name="Teague B."/>
            <person name="Potamousis K."/>
            <person name="Churas C."/>
            <person name="Place M."/>
            <person name="Herschleb J."/>
            <person name="Runnheim R."/>
            <person name="Forrest D."/>
            <person name="Amos-Landgraf J."/>
            <person name="Schwartz D.C."/>
            <person name="Cheng Z."/>
            <person name="Lindblad-Toh K."/>
            <person name="Eichler E.E."/>
            <person name="Ponting C.P."/>
        </authorList>
    </citation>
    <scope>NUCLEOTIDE SEQUENCE [LARGE SCALE GENOMIC DNA]</scope>
    <source>
        <strain>C57BL/6J</strain>
    </source>
</reference>
<reference key="3">
    <citation type="submission" date="2005-09" db="EMBL/GenBank/DDBJ databases">
        <authorList>
            <person name="Mural R.J."/>
            <person name="Adams M.D."/>
            <person name="Myers E.W."/>
            <person name="Smith H.O."/>
            <person name="Venter J.C."/>
        </authorList>
    </citation>
    <scope>NUCLEOTIDE SEQUENCE [LARGE SCALE GENOMIC DNA]</scope>
</reference>
<reference key="4">
    <citation type="journal article" date="2004" name="Genome Res.">
        <title>The status, quality, and expansion of the NIH full-length cDNA project: the Mammalian Gene Collection (MGC).</title>
        <authorList>
            <consortium name="The MGC Project Team"/>
        </authorList>
    </citation>
    <scope>NUCLEOTIDE SEQUENCE [LARGE SCALE MRNA]</scope>
    <source>
        <strain evidence="11">FVB/N</strain>
    </source>
</reference>
<reference key="5">
    <citation type="journal article" date="2004" name="Biochem. Biophys. Res. Commun.">
        <title>S100A16, a ubiquitously expressed EF-hand protein which is up-regulated in tumors.</title>
        <authorList>
            <person name="Marenholz I."/>
            <person name="Heizmann C.W."/>
        </authorList>
    </citation>
    <scope>DOMAIN</scope>
</reference>
<reference key="6">
    <citation type="journal article" date="2006" name="J. Biol. Chem.">
        <title>S100A16, a novel calcium-binding protein of the EF-hand superfamily.</title>
        <authorList>
            <person name="Sturchler E."/>
            <person name="Cox J.A."/>
            <person name="Durussel I."/>
            <person name="Weibel M."/>
            <person name="Heizmann C.W."/>
        </authorList>
    </citation>
    <scope>IDENTIFICATION BY MASS SPECTROMETRY</scope>
    <scope>TISSUE SPECIFICITY</scope>
    <scope>SUBUNIT</scope>
    <scope>SUBCELLULAR LOCATION</scope>
    <scope>FUNCTION</scope>
</reference>
<reference key="7">
    <citation type="journal article" date="2010" name="Cell">
        <title>A tissue-specific atlas of mouse protein phosphorylation and expression.</title>
        <authorList>
            <person name="Huttlin E.L."/>
            <person name="Jedrychowski M.P."/>
            <person name="Elias J.E."/>
            <person name="Goswami T."/>
            <person name="Rad R."/>
            <person name="Beausoleil S.A."/>
            <person name="Villen J."/>
            <person name="Haas W."/>
            <person name="Sowa M.E."/>
            <person name="Gygi S.P."/>
        </authorList>
    </citation>
    <scope>IDENTIFICATION BY MASS SPECTROMETRY [LARGE SCALE ANALYSIS]</scope>
    <source>
        <tissue>Heart</tissue>
        <tissue>Lung</tissue>
    </source>
</reference>
<reference key="8">
    <citation type="journal article" date="2011" name="Endocrinology">
        <title>Identification of S100A16 as a novel adipogenesis promoting factor in 3T3-L1 cells.</title>
        <authorList>
            <person name="Liu Y."/>
            <person name="Zhang R."/>
            <person name="Xin J."/>
            <person name="Sun Y."/>
            <person name="Li J."/>
            <person name="Wei D."/>
            <person name="Zhao A.Z."/>
        </authorList>
    </citation>
    <scope>FUNCTION</scope>
    <scope>INTERACTION WITH TP53</scope>
    <scope>SUBUNIT</scope>
    <scope>SUBCELLULAR LOCATION</scope>
    <scope>TISSUE SPECIFICITY</scope>
</reference>
<reference key="9">
    <citation type="journal article" date="2013" name="Mol. Biol. Rep.">
        <title>S100A16 inhibits osteogenesis but stimulates adipogenesis.</title>
        <authorList>
            <person name="Li D."/>
            <person name="Zhang R."/>
            <person name="Zhu W."/>
            <person name="Xue Y."/>
            <person name="Zhang Y."/>
            <person name="Huang Q."/>
            <person name="Liu M."/>
            <person name="Liu Y."/>
        </authorList>
    </citation>
    <scope>FUNCTION</scope>
</reference>
<organism>
    <name type="scientific">Mus musculus</name>
    <name type="common">Mouse</name>
    <dbReference type="NCBI Taxonomy" id="10090"/>
    <lineage>
        <taxon>Eukaryota</taxon>
        <taxon>Metazoa</taxon>
        <taxon>Chordata</taxon>
        <taxon>Craniata</taxon>
        <taxon>Vertebrata</taxon>
        <taxon>Euteleostomi</taxon>
        <taxon>Mammalia</taxon>
        <taxon>Eutheria</taxon>
        <taxon>Euarchontoglires</taxon>
        <taxon>Glires</taxon>
        <taxon>Rodentia</taxon>
        <taxon>Myomorpha</taxon>
        <taxon>Muroidea</taxon>
        <taxon>Muridae</taxon>
        <taxon>Murinae</taxon>
        <taxon>Mus</taxon>
        <taxon>Mus</taxon>
    </lineage>
</organism>
<feature type="chain" id="PRO_0000441802" description="Protein S100-A16">
    <location>
        <begin position="1"/>
        <end position="124"/>
    </location>
</feature>
<feature type="domain" description="EF-hand 1; degenerate" evidence="10">
    <location>
        <begin position="23"/>
        <end position="37"/>
    </location>
</feature>
<feature type="domain" description="EF-hand 2" evidence="2">
    <location>
        <begin position="54"/>
        <end position="89"/>
    </location>
</feature>
<feature type="region of interest" description="Disordered" evidence="3">
    <location>
        <begin position="97"/>
        <end position="124"/>
    </location>
</feature>
<feature type="binding site" evidence="2 8">
    <location>
        <position position="67"/>
    </location>
    <ligand>
        <name>Ca(2+)</name>
        <dbReference type="ChEBI" id="CHEBI:29108"/>
        <note>low affinity</note>
    </ligand>
</feature>
<feature type="binding site" evidence="2 8">
    <location>
        <position position="69"/>
    </location>
    <ligand>
        <name>Ca(2+)</name>
        <dbReference type="ChEBI" id="CHEBI:29108"/>
        <note>low affinity</note>
    </ligand>
</feature>
<feature type="binding site" evidence="2 8">
    <location>
        <position position="71"/>
    </location>
    <ligand>
        <name>Ca(2+)</name>
        <dbReference type="ChEBI" id="CHEBI:29108"/>
        <note>low affinity</note>
    </ligand>
</feature>
<feature type="binding site" evidence="2 8">
    <location>
        <position position="73"/>
    </location>
    <ligand>
        <name>Ca(2+)</name>
        <dbReference type="ChEBI" id="CHEBI:29108"/>
        <note>low affinity</note>
    </ligand>
</feature>
<feature type="binding site" evidence="2 8">
    <location>
        <position position="78"/>
    </location>
    <ligand>
        <name>Ca(2+)</name>
        <dbReference type="ChEBI" id="CHEBI:29108"/>
        <note>low affinity</note>
    </ligand>
</feature>
<feature type="sequence conflict" description="In Ref. 1; BAE35676." evidence="9" ref="1">
    <original>R</original>
    <variation>Q</variation>
    <location>
        <position position="39"/>
    </location>
</feature>
<dbReference type="EMBL" id="AY221962">
    <property type="protein sequence ID" value="AAP46153.1"/>
    <property type="molecule type" value="mRNA"/>
</dbReference>
<dbReference type="EMBL" id="AK009762">
    <property type="protein sequence ID" value="BAB26486.1"/>
    <property type="molecule type" value="mRNA"/>
</dbReference>
<dbReference type="EMBL" id="AK160178">
    <property type="protein sequence ID" value="BAE35676.1"/>
    <property type="molecule type" value="mRNA"/>
</dbReference>
<dbReference type="EMBL" id="AK160512">
    <property type="protein sequence ID" value="BAE35835.1"/>
    <property type="molecule type" value="mRNA"/>
</dbReference>
<dbReference type="EMBL" id="AK167006">
    <property type="protein sequence ID" value="BAE39183.1"/>
    <property type="molecule type" value="mRNA"/>
</dbReference>
<dbReference type="EMBL" id="AC160552">
    <property type="status" value="NOT_ANNOTATED_CDS"/>
    <property type="molecule type" value="Genomic_DNA"/>
</dbReference>
<dbReference type="EMBL" id="CH466547">
    <property type="protein sequence ID" value="EDL15119.1"/>
    <property type="molecule type" value="Genomic_DNA"/>
</dbReference>
<dbReference type="EMBL" id="CH466547">
    <property type="protein sequence ID" value="EDL15120.1"/>
    <property type="molecule type" value="Genomic_DNA"/>
</dbReference>
<dbReference type="EMBL" id="CH466547">
    <property type="protein sequence ID" value="EDL15121.1"/>
    <property type="molecule type" value="Genomic_DNA"/>
</dbReference>
<dbReference type="EMBL" id="CH466547">
    <property type="protein sequence ID" value="EDL15122.1"/>
    <property type="molecule type" value="Genomic_DNA"/>
</dbReference>
<dbReference type="EMBL" id="BC020031">
    <property type="protein sequence ID" value="AAH20031.1"/>
    <property type="molecule type" value="mRNA"/>
</dbReference>
<dbReference type="CCDS" id="CCDS17536.1"/>
<dbReference type="RefSeq" id="NP_001343534.1">
    <property type="nucleotide sequence ID" value="NM_001356605.1"/>
</dbReference>
<dbReference type="RefSeq" id="NP_001343535.1">
    <property type="nucleotide sequence ID" value="NM_001356606.1"/>
</dbReference>
<dbReference type="RefSeq" id="NP_001343536.1">
    <property type="nucleotide sequence ID" value="NM_001356607.1"/>
</dbReference>
<dbReference type="RefSeq" id="NP_001343537.1">
    <property type="nucleotide sequence ID" value="NM_001356608.1"/>
</dbReference>
<dbReference type="RefSeq" id="NP_001343538.1">
    <property type="nucleotide sequence ID" value="NM_001356609.1"/>
</dbReference>
<dbReference type="RefSeq" id="NP_001343539.1">
    <property type="nucleotide sequence ID" value="NM_001356610.1"/>
</dbReference>
<dbReference type="RefSeq" id="NP_080692.1">
    <property type="nucleotide sequence ID" value="NM_026416.3"/>
</dbReference>
<dbReference type="RefSeq" id="XP_006502011.1">
    <property type="nucleotide sequence ID" value="XM_006501948.2"/>
</dbReference>
<dbReference type="RefSeq" id="XP_006502012.1">
    <property type="nucleotide sequence ID" value="XM_006501949.3"/>
</dbReference>
<dbReference type="RefSeq" id="XP_006502013.1">
    <property type="nucleotide sequence ID" value="XM_006501950.3"/>
</dbReference>
<dbReference type="RefSeq" id="XP_006502014.1">
    <property type="nucleotide sequence ID" value="XM_006501951.1"/>
</dbReference>
<dbReference type="RefSeq" id="XP_006502015.1">
    <property type="nucleotide sequence ID" value="XM_006501952.1"/>
</dbReference>
<dbReference type="RefSeq" id="XP_036019147.1">
    <property type="nucleotide sequence ID" value="XM_036163254.1"/>
</dbReference>
<dbReference type="RefSeq" id="XP_036019148.1">
    <property type="nucleotide sequence ID" value="XM_036163255.1"/>
</dbReference>
<dbReference type="RefSeq" id="XP_036019150.1">
    <property type="nucleotide sequence ID" value="XM_036163257.1"/>
</dbReference>
<dbReference type="SMR" id="Q9D708"/>
<dbReference type="FunCoup" id="Q9D708">
    <property type="interactions" value="496"/>
</dbReference>
<dbReference type="STRING" id="10090.ENSMUSP00000096510"/>
<dbReference type="iPTMnet" id="Q9D708"/>
<dbReference type="PhosphoSitePlus" id="Q9D708"/>
<dbReference type="SwissPalm" id="Q9D708"/>
<dbReference type="jPOST" id="Q9D708"/>
<dbReference type="PaxDb" id="10090-ENSMUSP00000096510"/>
<dbReference type="ProteomicsDB" id="260876"/>
<dbReference type="Pumba" id="Q9D708"/>
<dbReference type="Antibodypedia" id="47029">
    <property type="antibodies" value="205 antibodies from 30 providers"/>
</dbReference>
<dbReference type="DNASU" id="67860"/>
<dbReference type="Ensembl" id="ENSMUST00000098910.3">
    <property type="protein sequence ID" value="ENSMUSP00000096509.3"/>
    <property type="gene ID" value="ENSMUSG00000074457.11"/>
</dbReference>
<dbReference type="Ensembl" id="ENSMUST00000098911.10">
    <property type="protein sequence ID" value="ENSMUSP00000096510.4"/>
    <property type="gene ID" value="ENSMUSG00000074457.11"/>
</dbReference>
<dbReference type="Ensembl" id="ENSMUST00000107331.8">
    <property type="protein sequence ID" value="ENSMUSP00000102954.2"/>
    <property type="gene ID" value="ENSMUSG00000074457.11"/>
</dbReference>
<dbReference type="Ensembl" id="ENSMUST00000107333.8">
    <property type="protein sequence ID" value="ENSMUSP00000102956.2"/>
    <property type="gene ID" value="ENSMUSG00000074457.11"/>
</dbReference>
<dbReference type="Ensembl" id="ENSMUST00000107334.8">
    <property type="protein sequence ID" value="ENSMUSP00000102957.2"/>
    <property type="gene ID" value="ENSMUSG00000074457.11"/>
</dbReference>
<dbReference type="Ensembl" id="ENSMUST00000107335.2">
    <property type="protein sequence ID" value="ENSMUSP00000102958.2"/>
    <property type="gene ID" value="ENSMUSG00000074457.11"/>
</dbReference>
<dbReference type="GeneID" id="67860"/>
<dbReference type="KEGG" id="mmu:67860"/>
<dbReference type="UCSC" id="uc008qcw.1">
    <property type="organism name" value="mouse"/>
</dbReference>
<dbReference type="AGR" id="MGI:1915110"/>
<dbReference type="CTD" id="140576"/>
<dbReference type="MGI" id="MGI:1915110">
    <property type="gene designation" value="S100a16"/>
</dbReference>
<dbReference type="VEuPathDB" id="HostDB:ENSMUSG00000074457"/>
<dbReference type="eggNOG" id="ENOG502S6F9">
    <property type="taxonomic scope" value="Eukaryota"/>
</dbReference>
<dbReference type="GeneTree" id="ENSGT00390000000920"/>
<dbReference type="InParanoid" id="Q9D708"/>
<dbReference type="OMA" id="DCYTDLE"/>
<dbReference type="OrthoDB" id="8961427at2759"/>
<dbReference type="PhylomeDB" id="Q9D708"/>
<dbReference type="TreeFam" id="TF332727"/>
<dbReference type="BioGRID-ORCS" id="67860">
    <property type="hits" value="0 hits in 76 CRISPR screens"/>
</dbReference>
<dbReference type="ChiTaRS" id="S100a16">
    <property type="organism name" value="mouse"/>
</dbReference>
<dbReference type="PRO" id="PR:Q9D708"/>
<dbReference type="Proteomes" id="UP000000589">
    <property type="component" value="Chromosome 3"/>
</dbReference>
<dbReference type="RNAct" id="Q9D708">
    <property type="molecule type" value="protein"/>
</dbReference>
<dbReference type="Bgee" id="ENSMUSG00000074457">
    <property type="expression patterns" value="Expressed in esophagus and 250 other cell types or tissues"/>
</dbReference>
<dbReference type="ExpressionAtlas" id="Q9D708">
    <property type="expression patterns" value="baseline and differential"/>
</dbReference>
<dbReference type="GO" id="GO:0005737">
    <property type="term" value="C:cytoplasm"/>
    <property type="evidence" value="ECO:0000314"/>
    <property type="project" value="MGI"/>
</dbReference>
<dbReference type="GO" id="GO:0005829">
    <property type="term" value="C:cytosol"/>
    <property type="evidence" value="ECO:0007669"/>
    <property type="project" value="Ensembl"/>
</dbReference>
<dbReference type="GO" id="GO:0005615">
    <property type="term" value="C:extracellular space"/>
    <property type="evidence" value="ECO:0007669"/>
    <property type="project" value="Ensembl"/>
</dbReference>
<dbReference type="GO" id="GO:0005730">
    <property type="term" value="C:nucleolus"/>
    <property type="evidence" value="ECO:0000266"/>
    <property type="project" value="MGI"/>
</dbReference>
<dbReference type="GO" id="GO:0005634">
    <property type="term" value="C:nucleus"/>
    <property type="evidence" value="ECO:0000314"/>
    <property type="project" value="MGI"/>
</dbReference>
<dbReference type="GO" id="GO:0005886">
    <property type="term" value="C:plasma membrane"/>
    <property type="evidence" value="ECO:0007669"/>
    <property type="project" value="Ensembl"/>
</dbReference>
<dbReference type="GO" id="GO:0005509">
    <property type="term" value="F:calcium ion binding"/>
    <property type="evidence" value="ECO:0000314"/>
    <property type="project" value="MGI"/>
</dbReference>
<dbReference type="GO" id="GO:0042802">
    <property type="term" value="F:identical protein binding"/>
    <property type="evidence" value="ECO:0000353"/>
    <property type="project" value="MGI"/>
</dbReference>
<dbReference type="GO" id="GO:0042803">
    <property type="term" value="F:protein homodimerization activity"/>
    <property type="evidence" value="ECO:0007669"/>
    <property type="project" value="Ensembl"/>
</dbReference>
<dbReference type="GO" id="GO:0051592">
    <property type="term" value="P:response to calcium ion"/>
    <property type="evidence" value="ECO:0000314"/>
    <property type="project" value="MGI"/>
</dbReference>
<dbReference type="CDD" id="cd05022">
    <property type="entry name" value="S-100A13"/>
    <property type="match status" value="1"/>
</dbReference>
<dbReference type="FunFam" id="1.10.238.10:FF:000192">
    <property type="entry name" value="Protein S100"/>
    <property type="match status" value="1"/>
</dbReference>
<dbReference type="Gene3D" id="1.10.238.10">
    <property type="entry name" value="EF-hand"/>
    <property type="match status" value="1"/>
</dbReference>
<dbReference type="InterPro" id="IPR011992">
    <property type="entry name" value="EF-hand-dom_pair"/>
</dbReference>
<dbReference type="InterPro" id="IPR018247">
    <property type="entry name" value="EF_Hand_1_Ca_BS"/>
</dbReference>
<dbReference type="InterPro" id="IPR002048">
    <property type="entry name" value="EF_hand_dom"/>
</dbReference>
<dbReference type="InterPro" id="IPR013787">
    <property type="entry name" value="S100_Ca-bd_sub"/>
</dbReference>
<dbReference type="PANTHER" id="PTHR11639:SF76">
    <property type="entry name" value="PROTEIN S100-A16"/>
    <property type="match status" value="1"/>
</dbReference>
<dbReference type="PANTHER" id="PTHR11639">
    <property type="entry name" value="S100 CALCIUM-BINDING PROTEIN"/>
    <property type="match status" value="1"/>
</dbReference>
<dbReference type="Pfam" id="PF01023">
    <property type="entry name" value="S_100"/>
    <property type="match status" value="1"/>
</dbReference>
<dbReference type="SMART" id="SM01394">
    <property type="entry name" value="S_100"/>
    <property type="match status" value="1"/>
</dbReference>
<dbReference type="SUPFAM" id="SSF47473">
    <property type="entry name" value="EF-hand"/>
    <property type="match status" value="1"/>
</dbReference>
<dbReference type="PROSITE" id="PS00018">
    <property type="entry name" value="EF_HAND_1"/>
    <property type="match status" value="1"/>
</dbReference>
<dbReference type="PROSITE" id="PS50222">
    <property type="entry name" value="EF_HAND_2"/>
    <property type="match status" value="1"/>
</dbReference>
<protein>
    <recommendedName>
        <fullName>Protein S100-A16</fullName>
    </recommendedName>
    <alternativeName>
        <fullName evidence="12">Protein S100F</fullName>
    </alternativeName>
    <alternativeName>
        <fullName>S100 calcium binding protein A16</fullName>
    </alternativeName>
</protein>
<sequence length="124" mass="14324">MADCYTELEKAVVVLVENFYKYVSKHSLVKNKISKSSFRKMLQRELNHMLTDTGNRKAADKLIQNLDANHDGRICFDEYWTMIGGITSPMANLIRQQECQQESQQECQQESQQESQQESQQGSS</sequence>
<proteinExistence type="evidence at protein level"/>
<keyword id="KW-0106">Calcium</keyword>
<keyword id="KW-0963">Cytoplasm</keyword>
<keyword id="KW-0479">Metal-binding</keyword>
<keyword id="KW-0539">Nucleus</keyword>
<keyword id="KW-1185">Reference proteome</keyword>
<keyword id="KW-0677">Repeat</keyword>
<keyword id="KW-0862">Zinc</keyword>
<gene>
    <name evidence="14" type="primary">S100a16</name>
</gene>
<evidence type="ECO:0000255" key="1"/>
<evidence type="ECO:0000255" key="2">
    <source>
        <dbReference type="PROSITE-ProRule" id="PRU00448"/>
    </source>
</evidence>
<evidence type="ECO:0000256" key="3">
    <source>
        <dbReference type="SAM" id="MobiDB-lite"/>
    </source>
</evidence>
<evidence type="ECO:0000269" key="4">
    <source>
    </source>
</evidence>
<evidence type="ECO:0000269" key="5">
    <source>
    </source>
</evidence>
<evidence type="ECO:0000269" key="6">
    <source>
    </source>
</evidence>
<evidence type="ECO:0000303" key="7">
    <source>
    </source>
</evidence>
<evidence type="ECO:0000303" key="8">
    <source>
    </source>
</evidence>
<evidence type="ECO:0000305" key="9"/>
<evidence type="ECO:0000305" key="10">
    <source>
    </source>
</evidence>
<evidence type="ECO:0000312" key="11">
    <source>
        <dbReference type="EMBL" id="AAH20031.1"/>
    </source>
</evidence>
<evidence type="ECO:0000312" key="12">
    <source>
        <dbReference type="EMBL" id="AAP46153.1"/>
    </source>
</evidence>
<evidence type="ECO:0000312" key="13">
    <source>
        <dbReference type="EMBL" id="BAB26486.1"/>
    </source>
</evidence>
<evidence type="ECO:0000312" key="14">
    <source>
        <dbReference type="MGI" id="MGI:1915110"/>
    </source>
</evidence>